<comment type="function">
    <text evidence="1">Catalyzes the initial step of the lipid cycle reactions in the biosynthesis of the cell wall peptidoglycan: transfers peptidoglycan precursor phospho-MurNAc-pentapeptide from UDP-MurNAc-pentapeptide onto the lipid carrier undecaprenyl phosphate, yielding undecaprenyl-pyrophosphoryl-MurNAc-pentapeptide, known as lipid I.</text>
</comment>
<comment type="catalytic activity">
    <reaction evidence="1">
        <text>UDP-N-acetyl-alpha-D-muramoyl-L-alanyl-gamma-D-glutamyl-meso-2,6-diaminopimeloyl-D-alanyl-D-alanine + di-trans,octa-cis-undecaprenyl phosphate = di-trans,octa-cis-undecaprenyl diphospho-N-acetyl-alpha-D-muramoyl-L-alanyl-D-glutamyl-meso-2,6-diaminopimeloyl-D-alanyl-D-alanine + UMP</text>
        <dbReference type="Rhea" id="RHEA:28386"/>
        <dbReference type="ChEBI" id="CHEBI:57865"/>
        <dbReference type="ChEBI" id="CHEBI:60392"/>
        <dbReference type="ChEBI" id="CHEBI:61386"/>
        <dbReference type="ChEBI" id="CHEBI:61387"/>
        <dbReference type="EC" id="2.7.8.13"/>
    </reaction>
</comment>
<comment type="cofactor">
    <cofactor evidence="1">
        <name>Mg(2+)</name>
        <dbReference type="ChEBI" id="CHEBI:18420"/>
    </cofactor>
</comment>
<comment type="pathway">
    <text evidence="1">Cell wall biogenesis; peptidoglycan biosynthesis.</text>
</comment>
<comment type="subcellular location">
    <subcellularLocation>
        <location evidence="1">Cell membrane</location>
        <topology evidence="1">Multi-pass membrane protein</topology>
    </subcellularLocation>
</comment>
<comment type="similarity">
    <text evidence="1">Belongs to the glycosyltransferase 4 family. MraY subfamily.</text>
</comment>
<evidence type="ECO:0000255" key="1">
    <source>
        <dbReference type="HAMAP-Rule" id="MF_00038"/>
    </source>
</evidence>
<dbReference type="EC" id="2.7.8.13" evidence="1"/>
<dbReference type="EMBL" id="CP000611">
    <property type="protein sequence ID" value="ABQ73933.1"/>
    <property type="molecule type" value="Genomic_DNA"/>
</dbReference>
<dbReference type="RefSeq" id="WP_003411171.1">
    <property type="nucleotide sequence ID" value="NZ_CP016972.1"/>
</dbReference>
<dbReference type="SMR" id="A5U4I3"/>
<dbReference type="KEGG" id="mra:MRA_2171"/>
<dbReference type="eggNOG" id="COG0472">
    <property type="taxonomic scope" value="Bacteria"/>
</dbReference>
<dbReference type="HOGENOM" id="CLU_023982_0_1_11"/>
<dbReference type="UniPathway" id="UPA00219"/>
<dbReference type="Proteomes" id="UP000001988">
    <property type="component" value="Chromosome"/>
</dbReference>
<dbReference type="GO" id="GO:0005886">
    <property type="term" value="C:plasma membrane"/>
    <property type="evidence" value="ECO:0007669"/>
    <property type="project" value="UniProtKB-SubCell"/>
</dbReference>
<dbReference type="GO" id="GO:0046872">
    <property type="term" value="F:metal ion binding"/>
    <property type="evidence" value="ECO:0007669"/>
    <property type="project" value="UniProtKB-KW"/>
</dbReference>
<dbReference type="GO" id="GO:0008963">
    <property type="term" value="F:phospho-N-acetylmuramoyl-pentapeptide-transferase activity"/>
    <property type="evidence" value="ECO:0007669"/>
    <property type="project" value="UniProtKB-UniRule"/>
</dbReference>
<dbReference type="GO" id="GO:0051992">
    <property type="term" value="F:UDP-N-acetylmuramoyl-L-alanyl-D-glutamyl-meso-2,6-diaminopimelyl-D-alanyl-D-alanine:undecaprenyl-phosphate transferase activity"/>
    <property type="evidence" value="ECO:0007669"/>
    <property type="project" value="RHEA"/>
</dbReference>
<dbReference type="GO" id="GO:0051301">
    <property type="term" value="P:cell division"/>
    <property type="evidence" value="ECO:0007669"/>
    <property type="project" value="UniProtKB-KW"/>
</dbReference>
<dbReference type="GO" id="GO:0071555">
    <property type="term" value="P:cell wall organization"/>
    <property type="evidence" value="ECO:0007669"/>
    <property type="project" value="UniProtKB-KW"/>
</dbReference>
<dbReference type="GO" id="GO:0009252">
    <property type="term" value="P:peptidoglycan biosynthetic process"/>
    <property type="evidence" value="ECO:0007669"/>
    <property type="project" value="UniProtKB-UniRule"/>
</dbReference>
<dbReference type="GO" id="GO:0008360">
    <property type="term" value="P:regulation of cell shape"/>
    <property type="evidence" value="ECO:0007669"/>
    <property type="project" value="UniProtKB-KW"/>
</dbReference>
<dbReference type="CDD" id="cd06852">
    <property type="entry name" value="GT_MraY"/>
    <property type="match status" value="1"/>
</dbReference>
<dbReference type="HAMAP" id="MF_00038">
    <property type="entry name" value="MraY"/>
    <property type="match status" value="1"/>
</dbReference>
<dbReference type="InterPro" id="IPR000715">
    <property type="entry name" value="Glycosyl_transferase_4"/>
</dbReference>
<dbReference type="InterPro" id="IPR003524">
    <property type="entry name" value="PNAcMuramoyl-5peptid_Trfase"/>
</dbReference>
<dbReference type="InterPro" id="IPR018480">
    <property type="entry name" value="PNAcMuramoyl-5peptid_Trfase_CS"/>
</dbReference>
<dbReference type="NCBIfam" id="TIGR00445">
    <property type="entry name" value="mraY"/>
    <property type="match status" value="1"/>
</dbReference>
<dbReference type="PANTHER" id="PTHR22926">
    <property type="entry name" value="PHOSPHO-N-ACETYLMURAMOYL-PENTAPEPTIDE-TRANSFERASE"/>
    <property type="match status" value="1"/>
</dbReference>
<dbReference type="PANTHER" id="PTHR22926:SF5">
    <property type="entry name" value="PHOSPHO-N-ACETYLMURAMOYL-PENTAPEPTIDE-TRANSFERASE HOMOLOG"/>
    <property type="match status" value="1"/>
</dbReference>
<dbReference type="Pfam" id="PF00953">
    <property type="entry name" value="Glycos_transf_4"/>
    <property type="match status" value="1"/>
</dbReference>
<dbReference type="Pfam" id="PF10555">
    <property type="entry name" value="MraY_sig1"/>
    <property type="match status" value="1"/>
</dbReference>
<dbReference type="PROSITE" id="PS01347">
    <property type="entry name" value="MRAY_1"/>
    <property type="match status" value="1"/>
</dbReference>
<dbReference type="PROSITE" id="PS01348">
    <property type="entry name" value="MRAY_2"/>
    <property type="match status" value="1"/>
</dbReference>
<keyword id="KW-0131">Cell cycle</keyword>
<keyword id="KW-0132">Cell division</keyword>
<keyword id="KW-1003">Cell membrane</keyword>
<keyword id="KW-0133">Cell shape</keyword>
<keyword id="KW-0961">Cell wall biogenesis/degradation</keyword>
<keyword id="KW-0460">Magnesium</keyword>
<keyword id="KW-0472">Membrane</keyword>
<keyword id="KW-0479">Metal-binding</keyword>
<keyword id="KW-0573">Peptidoglycan synthesis</keyword>
<keyword id="KW-1185">Reference proteome</keyword>
<keyword id="KW-0808">Transferase</keyword>
<keyword id="KW-0812">Transmembrane</keyword>
<keyword id="KW-1133">Transmembrane helix</keyword>
<gene>
    <name evidence="1" type="primary">mraY</name>
    <name type="ordered locus">MRA_2171</name>
</gene>
<feature type="chain" id="PRO_1000003016" description="Phospho-N-acetylmuramoyl-pentapeptide-transferase">
    <location>
        <begin position="1"/>
        <end position="359"/>
    </location>
</feature>
<feature type="transmembrane region" description="Helical" evidence="1">
    <location>
        <begin position="3"/>
        <end position="23"/>
    </location>
</feature>
<feature type="transmembrane region" description="Helical" evidence="1">
    <location>
        <begin position="55"/>
        <end position="75"/>
    </location>
</feature>
<feature type="transmembrane region" description="Helical" evidence="1">
    <location>
        <begin position="80"/>
        <end position="100"/>
    </location>
</feature>
<feature type="transmembrane region" description="Helical" evidence="1">
    <location>
        <begin position="117"/>
        <end position="137"/>
    </location>
</feature>
<feature type="transmembrane region" description="Helical" evidence="1">
    <location>
        <begin position="156"/>
        <end position="176"/>
    </location>
</feature>
<feature type="transmembrane region" description="Helical" evidence="1">
    <location>
        <begin position="187"/>
        <end position="207"/>
    </location>
</feature>
<feature type="transmembrane region" description="Helical" evidence="1">
    <location>
        <begin position="231"/>
        <end position="251"/>
    </location>
</feature>
<feature type="transmembrane region" description="Helical" evidence="1">
    <location>
        <begin position="255"/>
        <end position="275"/>
    </location>
</feature>
<feature type="transmembrane region" description="Helical" evidence="1">
    <location>
        <begin position="280"/>
        <end position="300"/>
    </location>
</feature>
<feature type="transmembrane region" description="Helical" evidence="1">
    <location>
        <begin position="334"/>
        <end position="354"/>
    </location>
</feature>
<organism>
    <name type="scientific">Mycobacterium tuberculosis (strain ATCC 25177 / H37Ra)</name>
    <dbReference type="NCBI Taxonomy" id="419947"/>
    <lineage>
        <taxon>Bacteria</taxon>
        <taxon>Bacillati</taxon>
        <taxon>Actinomycetota</taxon>
        <taxon>Actinomycetes</taxon>
        <taxon>Mycobacteriales</taxon>
        <taxon>Mycobacteriaceae</taxon>
        <taxon>Mycobacterium</taxon>
        <taxon>Mycobacterium tuberculosis complex</taxon>
    </lineage>
</organism>
<proteinExistence type="inferred from homology"/>
<reference key="1">
    <citation type="journal article" date="2008" name="PLoS ONE">
        <title>Genetic basis of virulence attenuation revealed by comparative genomic analysis of Mycobacterium tuberculosis strain H37Ra versus H37Rv.</title>
        <authorList>
            <person name="Zheng H."/>
            <person name="Lu L."/>
            <person name="Wang B."/>
            <person name="Pu S."/>
            <person name="Zhang X."/>
            <person name="Zhu G."/>
            <person name="Shi W."/>
            <person name="Zhang L."/>
            <person name="Wang H."/>
            <person name="Wang S."/>
            <person name="Zhao G."/>
            <person name="Zhang Y."/>
        </authorList>
    </citation>
    <scope>NUCLEOTIDE SEQUENCE [LARGE SCALE GENOMIC DNA]</scope>
    <source>
        <strain>ATCC 25177 / H37Ra</strain>
    </source>
</reference>
<accession>A5U4I3</accession>
<protein>
    <recommendedName>
        <fullName evidence="1">Phospho-N-acetylmuramoyl-pentapeptide-transferase</fullName>
        <ecNumber evidence="1">2.7.8.13</ecNumber>
    </recommendedName>
    <alternativeName>
        <fullName evidence="1">UDP-MurNAc-pentapeptide phosphotransferase</fullName>
    </alternativeName>
</protein>
<sequence>MRQILIAVAVAVTVSILLTPVLIRLFTKQGFGHQIREDGPPSHHTKRGTPSMGGVAILAGIWAGYLGAHLAGLAFDGEGIGASGLLVLGLATALGGVGFIDDLIKIRRSRNLGLNKTAKTVGQITSAVLFGVLVLQFRNAAGLTPGSADLSYVREIATVTLAPVLFVLFCVVIVSAWSNAVNFTDGLDGLAAGTMAMVTAAYVLITFWQYRNACVTAPGLGCYNVRDPLDLALIAAATAGACIGFLWWNAAPAKIFMGDTGSLALGGVIAGLSVTSRTEILAVVLGALFVAEITSVVLQILTFRTTGRRMFRMAPFHHHFELVGWAETTVIIRFWLLTAITCGLGVALFYGEWLAAVGA</sequence>
<name>MRAY_MYCTA</name>